<accession>B0U083</accession>
<keyword id="KW-0004">4Fe-4S</keyword>
<keyword id="KW-0963">Cytoplasm</keyword>
<keyword id="KW-1015">Disulfide bond</keyword>
<keyword id="KW-0408">Iron</keyword>
<keyword id="KW-0411">Iron-sulfur</keyword>
<keyword id="KW-0479">Metal-binding</keyword>
<keyword id="KW-0489">Methyltransferase</keyword>
<keyword id="KW-0698">rRNA processing</keyword>
<keyword id="KW-0949">S-adenosyl-L-methionine</keyword>
<keyword id="KW-0808">Transferase</keyword>
<keyword id="KW-0819">tRNA processing</keyword>
<gene>
    <name evidence="1" type="primary">rlmN</name>
    <name type="ordered locus">Fphi_1688</name>
</gene>
<organism>
    <name type="scientific">Francisella philomiragia subsp. philomiragia (strain ATCC 25017 / CCUG 19701 / FSC 153 / O#319-036)</name>
    <dbReference type="NCBI Taxonomy" id="484022"/>
    <lineage>
        <taxon>Bacteria</taxon>
        <taxon>Pseudomonadati</taxon>
        <taxon>Pseudomonadota</taxon>
        <taxon>Gammaproteobacteria</taxon>
        <taxon>Thiotrichales</taxon>
        <taxon>Francisellaceae</taxon>
        <taxon>Francisella</taxon>
    </lineage>
</organism>
<comment type="function">
    <text evidence="1">Specifically methylates position 2 of adenine 2503 in 23S rRNA and position 2 of adenine 37 in tRNAs. m2A2503 modification seems to play a crucial role in the proofreading step occurring at the peptidyl transferase center and thus would serve to optimize ribosomal fidelity.</text>
</comment>
<comment type="catalytic activity">
    <reaction evidence="1">
        <text>adenosine(2503) in 23S rRNA + 2 reduced [2Fe-2S]-[ferredoxin] + 2 S-adenosyl-L-methionine = 2-methyladenosine(2503) in 23S rRNA + 5'-deoxyadenosine + L-methionine + 2 oxidized [2Fe-2S]-[ferredoxin] + S-adenosyl-L-homocysteine</text>
        <dbReference type="Rhea" id="RHEA:42916"/>
        <dbReference type="Rhea" id="RHEA-COMP:10000"/>
        <dbReference type="Rhea" id="RHEA-COMP:10001"/>
        <dbReference type="Rhea" id="RHEA-COMP:10152"/>
        <dbReference type="Rhea" id="RHEA-COMP:10282"/>
        <dbReference type="ChEBI" id="CHEBI:17319"/>
        <dbReference type="ChEBI" id="CHEBI:33737"/>
        <dbReference type="ChEBI" id="CHEBI:33738"/>
        <dbReference type="ChEBI" id="CHEBI:57844"/>
        <dbReference type="ChEBI" id="CHEBI:57856"/>
        <dbReference type="ChEBI" id="CHEBI:59789"/>
        <dbReference type="ChEBI" id="CHEBI:74411"/>
        <dbReference type="ChEBI" id="CHEBI:74497"/>
        <dbReference type="EC" id="2.1.1.192"/>
    </reaction>
</comment>
<comment type="catalytic activity">
    <reaction evidence="1">
        <text>adenosine(37) in tRNA + 2 reduced [2Fe-2S]-[ferredoxin] + 2 S-adenosyl-L-methionine = 2-methyladenosine(37) in tRNA + 5'-deoxyadenosine + L-methionine + 2 oxidized [2Fe-2S]-[ferredoxin] + S-adenosyl-L-homocysteine</text>
        <dbReference type="Rhea" id="RHEA:43332"/>
        <dbReference type="Rhea" id="RHEA-COMP:10000"/>
        <dbReference type="Rhea" id="RHEA-COMP:10001"/>
        <dbReference type="Rhea" id="RHEA-COMP:10162"/>
        <dbReference type="Rhea" id="RHEA-COMP:10485"/>
        <dbReference type="ChEBI" id="CHEBI:17319"/>
        <dbReference type="ChEBI" id="CHEBI:33737"/>
        <dbReference type="ChEBI" id="CHEBI:33738"/>
        <dbReference type="ChEBI" id="CHEBI:57844"/>
        <dbReference type="ChEBI" id="CHEBI:57856"/>
        <dbReference type="ChEBI" id="CHEBI:59789"/>
        <dbReference type="ChEBI" id="CHEBI:74411"/>
        <dbReference type="ChEBI" id="CHEBI:74497"/>
        <dbReference type="EC" id="2.1.1.192"/>
    </reaction>
</comment>
<comment type="cofactor">
    <cofactor evidence="1">
        <name>[4Fe-4S] cluster</name>
        <dbReference type="ChEBI" id="CHEBI:49883"/>
    </cofactor>
    <text evidence="1">Binds 1 [4Fe-4S] cluster. The cluster is coordinated with 3 cysteines and an exchangeable S-adenosyl-L-methionine.</text>
</comment>
<comment type="subcellular location">
    <subcellularLocation>
        <location evidence="1">Cytoplasm</location>
    </subcellularLocation>
</comment>
<comment type="miscellaneous">
    <text evidence="1">Reaction proceeds by a ping-pong mechanism involving intermediate methylation of a conserved cysteine residue.</text>
</comment>
<comment type="similarity">
    <text evidence="1">Belongs to the radical SAM superfamily. RlmN family.</text>
</comment>
<evidence type="ECO:0000255" key="1">
    <source>
        <dbReference type="HAMAP-Rule" id="MF_01849"/>
    </source>
</evidence>
<evidence type="ECO:0000255" key="2">
    <source>
        <dbReference type="PROSITE-ProRule" id="PRU01266"/>
    </source>
</evidence>
<dbReference type="EC" id="2.1.1.192" evidence="1"/>
<dbReference type="EMBL" id="CP000937">
    <property type="protein sequence ID" value="ABZ87913.1"/>
    <property type="molecule type" value="Genomic_DNA"/>
</dbReference>
<dbReference type="SMR" id="B0U083"/>
<dbReference type="KEGG" id="fph:Fphi_1688"/>
<dbReference type="eggNOG" id="COG0820">
    <property type="taxonomic scope" value="Bacteria"/>
</dbReference>
<dbReference type="HOGENOM" id="CLU_029101_0_0_6"/>
<dbReference type="GO" id="GO:0005737">
    <property type="term" value="C:cytoplasm"/>
    <property type="evidence" value="ECO:0007669"/>
    <property type="project" value="UniProtKB-SubCell"/>
</dbReference>
<dbReference type="GO" id="GO:0051539">
    <property type="term" value="F:4 iron, 4 sulfur cluster binding"/>
    <property type="evidence" value="ECO:0007669"/>
    <property type="project" value="UniProtKB-UniRule"/>
</dbReference>
<dbReference type="GO" id="GO:0046872">
    <property type="term" value="F:metal ion binding"/>
    <property type="evidence" value="ECO:0007669"/>
    <property type="project" value="UniProtKB-KW"/>
</dbReference>
<dbReference type="GO" id="GO:0070040">
    <property type="term" value="F:rRNA (adenine(2503)-C2-)-methyltransferase activity"/>
    <property type="evidence" value="ECO:0007669"/>
    <property type="project" value="UniProtKB-UniRule"/>
</dbReference>
<dbReference type="GO" id="GO:0019843">
    <property type="term" value="F:rRNA binding"/>
    <property type="evidence" value="ECO:0007669"/>
    <property type="project" value="UniProtKB-UniRule"/>
</dbReference>
<dbReference type="GO" id="GO:0002935">
    <property type="term" value="F:tRNA (adenine(37)-C2)-methyltransferase activity"/>
    <property type="evidence" value="ECO:0007669"/>
    <property type="project" value="UniProtKB-UniRule"/>
</dbReference>
<dbReference type="GO" id="GO:0000049">
    <property type="term" value="F:tRNA binding"/>
    <property type="evidence" value="ECO:0007669"/>
    <property type="project" value="UniProtKB-UniRule"/>
</dbReference>
<dbReference type="GO" id="GO:0070475">
    <property type="term" value="P:rRNA base methylation"/>
    <property type="evidence" value="ECO:0007669"/>
    <property type="project" value="UniProtKB-UniRule"/>
</dbReference>
<dbReference type="GO" id="GO:0030488">
    <property type="term" value="P:tRNA methylation"/>
    <property type="evidence" value="ECO:0007669"/>
    <property type="project" value="UniProtKB-UniRule"/>
</dbReference>
<dbReference type="CDD" id="cd01335">
    <property type="entry name" value="Radical_SAM"/>
    <property type="match status" value="1"/>
</dbReference>
<dbReference type="FunFam" id="1.10.150.530:FF:000003">
    <property type="entry name" value="Dual-specificity RNA methyltransferase RlmN"/>
    <property type="match status" value="1"/>
</dbReference>
<dbReference type="FunFam" id="3.20.20.70:FF:000008">
    <property type="entry name" value="Dual-specificity RNA methyltransferase RlmN"/>
    <property type="match status" value="1"/>
</dbReference>
<dbReference type="Gene3D" id="1.10.150.530">
    <property type="match status" value="1"/>
</dbReference>
<dbReference type="Gene3D" id="3.20.20.70">
    <property type="entry name" value="Aldolase class I"/>
    <property type="match status" value="1"/>
</dbReference>
<dbReference type="HAMAP" id="MF_01849">
    <property type="entry name" value="RNA_methyltr_RlmN"/>
    <property type="match status" value="1"/>
</dbReference>
<dbReference type="InterPro" id="IPR013785">
    <property type="entry name" value="Aldolase_TIM"/>
</dbReference>
<dbReference type="InterPro" id="IPR006638">
    <property type="entry name" value="Elp3/MiaA/NifB-like_rSAM"/>
</dbReference>
<dbReference type="InterPro" id="IPR040072">
    <property type="entry name" value="Methyltransferase_A"/>
</dbReference>
<dbReference type="InterPro" id="IPR048641">
    <property type="entry name" value="RlmN_N"/>
</dbReference>
<dbReference type="InterPro" id="IPR027492">
    <property type="entry name" value="RNA_MTrfase_RlmN"/>
</dbReference>
<dbReference type="InterPro" id="IPR004383">
    <property type="entry name" value="rRNA_lsu_MTrfase_RlmN/Cfr"/>
</dbReference>
<dbReference type="InterPro" id="IPR007197">
    <property type="entry name" value="rSAM"/>
</dbReference>
<dbReference type="NCBIfam" id="TIGR00048">
    <property type="entry name" value="rRNA_mod_RlmN"/>
    <property type="match status" value="1"/>
</dbReference>
<dbReference type="PANTHER" id="PTHR30544">
    <property type="entry name" value="23S RRNA METHYLTRANSFERASE"/>
    <property type="match status" value="1"/>
</dbReference>
<dbReference type="PANTHER" id="PTHR30544:SF5">
    <property type="entry name" value="RADICAL SAM CORE DOMAIN-CONTAINING PROTEIN"/>
    <property type="match status" value="1"/>
</dbReference>
<dbReference type="Pfam" id="PF04055">
    <property type="entry name" value="Radical_SAM"/>
    <property type="match status" value="1"/>
</dbReference>
<dbReference type="Pfam" id="PF21016">
    <property type="entry name" value="RlmN_N"/>
    <property type="match status" value="1"/>
</dbReference>
<dbReference type="PIRSF" id="PIRSF006004">
    <property type="entry name" value="CHP00048"/>
    <property type="match status" value="1"/>
</dbReference>
<dbReference type="SFLD" id="SFLDF00275">
    <property type="entry name" value="adenosine_C2_methyltransferase"/>
    <property type="match status" value="1"/>
</dbReference>
<dbReference type="SFLD" id="SFLDG01082">
    <property type="entry name" value="B12-binding_domain_containing"/>
    <property type="match status" value="1"/>
</dbReference>
<dbReference type="SFLD" id="SFLDG01062">
    <property type="entry name" value="methyltransferase_(Class_A)"/>
    <property type="match status" value="1"/>
</dbReference>
<dbReference type="SMART" id="SM00729">
    <property type="entry name" value="Elp3"/>
    <property type="match status" value="1"/>
</dbReference>
<dbReference type="SUPFAM" id="SSF102114">
    <property type="entry name" value="Radical SAM enzymes"/>
    <property type="match status" value="1"/>
</dbReference>
<dbReference type="PROSITE" id="PS51918">
    <property type="entry name" value="RADICAL_SAM"/>
    <property type="match status" value="1"/>
</dbReference>
<reference key="1">
    <citation type="submission" date="2007-12" db="EMBL/GenBank/DDBJ databases">
        <title>Complete sequence of chromosome of Francisella philomiragia subsp. philomiragia ATCC 25017.</title>
        <authorList>
            <consortium name="US DOE Joint Genome Institute"/>
            <person name="Copeland A."/>
            <person name="Lucas S."/>
            <person name="Lapidus A."/>
            <person name="Barry K."/>
            <person name="Detter J.C."/>
            <person name="Glavina del Rio T."/>
            <person name="Hammon N."/>
            <person name="Israni S."/>
            <person name="Dalin E."/>
            <person name="Tice H."/>
            <person name="Pitluck S."/>
            <person name="Chain P."/>
            <person name="Malfatti S."/>
            <person name="Shin M."/>
            <person name="Vergez L."/>
            <person name="Schmutz J."/>
            <person name="Larimer F."/>
            <person name="Land M."/>
            <person name="Hauser L."/>
            <person name="Richardson P."/>
        </authorList>
    </citation>
    <scope>NUCLEOTIDE SEQUENCE [LARGE SCALE GENOMIC DNA]</scope>
    <source>
        <strain>ATCC 25017 / CCUG 19701 / FSC 153 / O#319-036</strain>
    </source>
</reference>
<sequence length="370" mass="41623">MQQDKINLLGLNQKAIEDFFISIGEKKFHARQVFKWIHKKGVIDFDSMTDLGKNLRNKLKENAEIVIPKVVFNKASKDGTHKWLIDVGGSAVETVFIPEEGRGTLCVSSQVGCTLNCSFCSTGKQGFNRNLSSAEVISQLWIAARTLSKNNGEHDFSVTNIVMMGMGEPLMNFENVVPAMDIMMDDLAYGLSRRKVTLSTSGVVPRIYDLLEQSGVSLAVSLHAPTDSLRNEIVPINKKYNIDELLEACKLYAEKGPHKHITFEYTLMEEVNDNLSDAEQLIELLRSREVPAKINLIPFNPYPGTPYRKPSNNRIHRFKEFLQHNGFVTTVRKTRGDDIDAACGQLAGDVMDKTKRKERYLKKLGDKNAI</sequence>
<protein>
    <recommendedName>
        <fullName evidence="1">Dual-specificity RNA methyltransferase RlmN</fullName>
        <ecNumber evidence="1">2.1.1.192</ecNumber>
    </recommendedName>
    <alternativeName>
        <fullName evidence="1">23S rRNA (adenine(2503)-C(2))-methyltransferase</fullName>
    </alternativeName>
    <alternativeName>
        <fullName evidence="1">23S rRNA m2A2503 methyltransferase</fullName>
    </alternativeName>
    <alternativeName>
        <fullName evidence="1">Ribosomal RNA large subunit methyltransferase N</fullName>
    </alternativeName>
    <alternativeName>
        <fullName evidence="1">tRNA (adenine(37)-C(2))-methyltransferase</fullName>
    </alternativeName>
    <alternativeName>
        <fullName evidence="1">tRNA m2A37 methyltransferase</fullName>
    </alternativeName>
</protein>
<name>RLMN_FRAP2</name>
<proteinExistence type="inferred from homology"/>
<feature type="chain" id="PRO_0000350179" description="Dual-specificity RNA methyltransferase RlmN">
    <location>
        <begin position="1"/>
        <end position="370"/>
    </location>
</feature>
<feature type="domain" description="Radical SAM core" evidence="2">
    <location>
        <begin position="99"/>
        <end position="337"/>
    </location>
</feature>
<feature type="active site" description="Proton acceptor" evidence="1">
    <location>
        <position position="93"/>
    </location>
</feature>
<feature type="active site" description="S-methylcysteine intermediate" evidence="1">
    <location>
        <position position="343"/>
    </location>
</feature>
<feature type="binding site" evidence="1">
    <location>
        <position position="113"/>
    </location>
    <ligand>
        <name>[4Fe-4S] cluster</name>
        <dbReference type="ChEBI" id="CHEBI:49883"/>
        <note>4Fe-4S-S-AdoMet</note>
    </ligand>
</feature>
<feature type="binding site" evidence="1">
    <location>
        <position position="117"/>
    </location>
    <ligand>
        <name>[4Fe-4S] cluster</name>
        <dbReference type="ChEBI" id="CHEBI:49883"/>
        <note>4Fe-4S-S-AdoMet</note>
    </ligand>
</feature>
<feature type="binding site" evidence="1">
    <location>
        <position position="120"/>
    </location>
    <ligand>
        <name>[4Fe-4S] cluster</name>
        <dbReference type="ChEBI" id="CHEBI:49883"/>
        <note>4Fe-4S-S-AdoMet</note>
    </ligand>
</feature>
<feature type="binding site" evidence="1">
    <location>
        <begin position="167"/>
        <end position="168"/>
    </location>
    <ligand>
        <name>S-adenosyl-L-methionine</name>
        <dbReference type="ChEBI" id="CHEBI:59789"/>
    </ligand>
</feature>
<feature type="binding site" evidence="1">
    <location>
        <position position="199"/>
    </location>
    <ligand>
        <name>S-adenosyl-L-methionine</name>
        <dbReference type="ChEBI" id="CHEBI:59789"/>
    </ligand>
</feature>
<feature type="binding site" evidence="1">
    <location>
        <begin position="221"/>
        <end position="223"/>
    </location>
    <ligand>
        <name>S-adenosyl-L-methionine</name>
        <dbReference type="ChEBI" id="CHEBI:59789"/>
    </ligand>
</feature>
<feature type="binding site" evidence="1">
    <location>
        <position position="300"/>
    </location>
    <ligand>
        <name>S-adenosyl-L-methionine</name>
        <dbReference type="ChEBI" id="CHEBI:59789"/>
    </ligand>
</feature>
<feature type="disulfide bond" description="(transient)" evidence="1">
    <location>
        <begin position="106"/>
        <end position="343"/>
    </location>
</feature>